<name>RS17_CAMJR</name>
<dbReference type="EMBL" id="CP000025">
    <property type="protein sequence ID" value="AAW36288.1"/>
    <property type="molecule type" value="Genomic_DNA"/>
</dbReference>
<dbReference type="RefSeq" id="WP_002851549.1">
    <property type="nucleotide sequence ID" value="NC_003912.7"/>
</dbReference>
<dbReference type="SMR" id="Q5HS99"/>
<dbReference type="KEGG" id="cjr:CJE1866"/>
<dbReference type="HOGENOM" id="CLU_073626_1_1_7"/>
<dbReference type="GO" id="GO:0022627">
    <property type="term" value="C:cytosolic small ribosomal subunit"/>
    <property type="evidence" value="ECO:0007669"/>
    <property type="project" value="TreeGrafter"/>
</dbReference>
<dbReference type="GO" id="GO:0019843">
    <property type="term" value="F:rRNA binding"/>
    <property type="evidence" value="ECO:0007669"/>
    <property type="project" value="UniProtKB-UniRule"/>
</dbReference>
<dbReference type="GO" id="GO:0003735">
    <property type="term" value="F:structural constituent of ribosome"/>
    <property type="evidence" value="ECO:0007669"/>
    <property type="project" value="InterPro"/>
</dbReference>
<dbReference type="GO" id="GO:0006412">
    <property type="term" value="P:translation"/>
    <property type="evidence" value="ECO:0007669"/>
    <property type="project" value="UniProtKB-UniRule"/>
</dbReference>
<dbReference type="CDD" id="cd00364">
    <property type="entry name" value="Ribosomal_uS17"/>
    <property type="match status" value="1"/>
</dbReference>
<dbReference type="Gene3D" id="2.40.50.140">
    <property type="entry name" value="Nucleic acid-binding proteins"/>
    <property type="match status" value="1"/>
</dbReference>
<dbReference type="HAMAP" id="MF_01345_B">
    <property type="entry name" value="Ribosomal_uS17_B"/>
    <property type="match status" value="1"/>
</dbReference>
<dbReference type="InterPro" id="IPR012340">
    <property type="entry name" value="NA-bd_OB-fold"/>
</dbReference>
<dbReference type="InterPro" id="IPR000266">
    <property type="entry name" value="Ribosomal_uS17"/>
</dbReference>
<dbReference type="InterPro" id="IPR019984">
    <property type="entry name" value="Ribosomal_uS17_bact/chlr"/>
</dbReference>
<dbReference type="InterPro" id="IPR019979">
    <property type="entry name" value="Ribosomal_uS17_CS"/>
</dbReference>
<dbReference type="NCBIfam" id="NF004123">
    <property type="entry name" value="PRK05610.1"/>
    <property type="match status" value="1"/>
</dbReference>
<dbReference type="NCBIfam" id="TIGR03635">
    <property type="entry name" value="uS17_bact"/>
    <property type="match status" value="1"/>
</dbReference>
<dbReference type="PANTHER" id="PTHR10744">
    <property type="entry name" value="40S RIBOSOMAL PROTEIN S11 FAMILY MEMBER"/>
    <property type="match status" value="1"/>
</dbReference>
<dbReference type="PANTHER" id="PTHR10744:SF1">
    <property type="entry name" value="SMALL RIBOSOMAL SUBUNIT PROTEIN US17M"/>
    <property type="match status" value="1"/>
</dbReference>
<dbReference type="Pfam" id="PF00366">
    <property type="entry name" value="Ribosomal_S17"/>
    <property type="match status" value="1"/>
</dbReference>
<dbReference type="PRINTS" id="PR00973">
    <property type="entry name" value="RIBOSOMALS17"/>
</dbReference>
<dbReference type="SUPFAM" id="SSF50249">
    <property type="entry name" value="Nucleic acid-binding proteins"/>
    <property type="match status" value="1"/>
</dbReference>
<dbReference type="PROSITE" id="PS00056">
    <property type="entry name" value="RIBOSOMAL_S17"/>
    <property type="match status" value="1"/>
</dbReference>
<comment type="function">
    <text evidence="1">One of the primary rRNA binding proteins, it binds specifically to the 5'-end of 16S ribosomal RNA.</text>
</comment>
<comment type="subunit">
    <text evidence="1">Part of the 30S ribosomal subunit.</text>
</comment>
<comment type="similarity">
    <text evidence="1">Belongs to the universal ribosomal protein uS17 family.</text>
</comment>
<keyword id="KW-0687">Ribonucleoprotein</keyword>
<keyword id="KW-0689">Ribosomal protein</keyword>
<keyword id="KW-0694">RNA-binding</keyword>
<keyword id="KW-0699">rRNA-binding</keyword>
<feature type="chain" id="PRO_0000233451" description="Small ribosomal subunit protein uS17">
    <location>
        <begin position="1"/>
        <end position="83"/>
    </location>
</feature>
<reference key="1">
    <citation type="journal article" date="2005" name="PLoS Biol.">
        <title>Major structural differences and novel potential virulence mechanisms from the genomes of multiple Campylobacter species.</title>
        <authorList>
            <person name="Fouts D.E."/>
            <person name="Mongodin E.F."/>
            <person name="Mandrell R.E."/>
            <person name="Miller W.G."/>
            <person name="Rasko D.A."/>
            <person name="Ravel J."/>
            <person name="Brinkac L.M."/>
            <person name="DeBoy R.T."/>
            <person name="Parker C.T."/>
            <person name="Daugherty S.C."/>
            <person name="Dodson R.J."/>
            <person name="Durkin A.S."/>
            <person name="Madupu R."/>
            <person name="Sullivan S.A."/>
            <person name="Shetty J.U."/>
            <person name="Ayodeji M.A."/>
            <person name="Shvartsbeyn A."/>
            <person name="Schatz M.C."/>
            <person name="Badger J.H."/>
            <person name="Fraser C.M."/>
            <person name="Nelson K.E."/>
        </authorList>
    </citation>
    <scope>NUCLEOTIDE SEQUENCE [LARGE SCALE GENOMIC DNA]</scope>
    <source>
        <strain>RM1221</strain>
    </source>
</reference>
<evidence type="ECO:0000255" key="1">
    <source>
        <dbReference type="HAMAP-Rule" id="MF_01345"/>
    </source>
</evidence>
<evidence type="ECO:0000305" key="2"/>
<protein>
    <recommendedName>
        <fullName evidence="1">Small ribosomal subunit protein uS17</fullName>
    </recommendedName>
    <alternativeName>
        <fullName evidence="2">30S ribosomal protein S17</fullName>
    </alternativeName>
</protein>
<organism>
    <name type="scientific">Campylobacter jejuni (strain RM1221)</name>
    <dbReference type="NCBI Taxonomy" id="195099"/>
    <lineage>
        <taxon>Bacteria</taxon>
        <taxon>Pseudomonadati</taxon>
        <taxon>Campylobacterota</taxon>
        <taxon>Epsilonproteobacteria</taxon>
        <taxon>Campylobacterales</taxon>
        <taxon>Campylobacteraceae</taxon>
        <taxon>Campylobacter</taxon>
    </lineage>
</organism>
<gene>
    <name evidence="1" type="primary">rpsQ</name>
    <name type="ordered locus">CJE1866</name>
</gene>
<sequence>MAFKREIQGVVVKIAGEKTASVLVERKVVHPRYRKIVKRFKKYLIHDERNEVKVGDTVVAVECRPLSKRKSFRLKSVLATGVE</sequence>
<accession>Q5HS99</accession>
<proteinExistence type="inferred from homology"/>